<feature type="chain" id="PRO_0000336148" description="UPF0102 protein Bcep18194_A3391">
    <location>
        <begin position="1"/>
        <end position="142"/>
    </location>
</feature>
<feature type="region of interest" description="Disordered" evidence="2">
    <location>
        <begin position="1"/>
        <end position="27"/>
    </location>
</feature>
<organism>
    <name type="scientific">Burkholderia lata (strain ATCC 17760 / DSM 23089 / LMG 22485 / NCIMB 9086 / R18194 / 383)</name>
    <dbReference type="NCBI Taxonomy" id="482957"/>
    <lineage>
        <taxon>Bacteria</taxon>
        <taxon>Pseudomonadati</taxon>
        <taxon>Pseudomonadota</taxon>
        <taxon>Betaproteobacteria</taxon>
        <taxon>Burkholderiales</taxon>
        <taxon>Burkholderiaceae</taxon>
        <taxon>Burkholderia</taxon>
        <taxon>Burkholderia cepacia complex</taxon>
    </lineage>
</organism>
<name>Y3391_BURL3</name>
<accession>Q39KM3</accession>
<reference key="1">
    <citation type="submission" date="2005-10" db="EMBL/GenBank/DDBJ databases">
        <title>Complete sequence of chromosome 1 of Burkholderia sp. 383.</title>
        <authorList>
            <consortium name="US DOE Joint Genome Institute"/>
            <person name="Copeland A."/>
            <person name="Lucas S."/>
            <person name="Lapidus A."/>
            <person name="Barry K."/>
            <person name="Detter J.C."/>
            <person name="Glavina T."/>
            <person name="Hammon N."/>
            <person name="Israni S."/>
            <person name="Pitluck S."/>
            <person name="Chain P."/>
            <person name="Malfatti S."/>
            <person name="Shin M."/>
            <person name="Vergez L."/>
            <person name="Schmutz J."/>
            <person name="Larimer F."/>
            <person name="Land M."/>
            <person name="Kyrpides N."/>
            <person name="Lykidis A."/>
            <person name="Richardson P."/>
        </authorList>
    </citation>
    <scope>NUCLEOTIDE SEQUENCE [LARGE SCALE GENOMIC DNA]</scope>
    <source>
        <strain>ATCC 17760 / DSM 23089 / LMG 22485 / NCIMB 9086 / R18194 / 383</strain>
    </source>
</reference>
<evidence type="ECO:0000255" key="1">
    <source>
        <dbReference type="HAMAP-Rule" id="MF_00048"/>
    </source>
</evidence>
<evidence type="ECO:0000256" key="2">
    <source>
        <dbReference type="SAM" id="MobiDB-lite"/>
    </source>
</evidence>
<evidence type="ECO:0000305" key="3"/>
<dbReference type="EMBL" id="CP000151">
    <property type="protein sequence ID" value="ABB06993.1"/>
    <property type="status" value="ALT_INIT"/>
    <property type="molecule type" value="Genomic_DNA"/>
</dbReference>
<dbReference type="RefSeq" id="WP_041492719.1">
    <property type="nucleotide sequence ID" value="NC_007510.1"/>
</dbReference>
<dbReference type="SMR" id="Q39KM3"/>
<dbReference type="GeneID" id="45093299"/>
<dbReference type="KEGG" id="bur:Bcep18194_A3391"/>
<dbReference type="PATRIC" id="fig|482957.22.peg.230"/>
<dbReference type="HOGENOM" id="CLU_115353_1_0_4"/>
<dbReference type="Proteomes" id="UP000002705">
    <property type="component" value="Chromosome 1"/>
</dbReference>
<dbReference type="GO" id="GO:0003676">
    <property type="term" value="F:nucleic acid binding"/>
    <property type="evidence" value="ECO:0007669"/>
    <property type="project" value="InterPro"/>
</dbReference>
<dbReference type="Gene3D" id="3.40.1350.10">
    <property type="match status" value="1"/>
</dbReference>
<dbReference type="HAMAP" id="MF_00048">
    <property type="entry name" value="UPF0102"/>
    <property type="match status" value="1"/>
</dbReference>
<dbReference type="InterPro" id="IPR011335">
    <property type="entry name" value="Restrct_endonuc-II-like"/>
</dbReference>
<dbReference type="InterPro" id="IPR011856">
    <property type="entry name" value="tRNA_endonuc-like_dom_sf"/>
</dbReference>
<dbReference type="InterPro" id="IPR003509">
    <property type="entry name" value="UPF0102_YraN-like"/>
</dbReference>
<dbReference type="NCBIfam" id="NF009150">
    <property type="entry name" value="PRK12497.1-3"/>
    <property type="match status" value="1"/>
</dbReference>
<dbReference type="NCBIfam" id="TIGR00252">
    <property type="entry name" value="YraN family protein"/>
    <property type="match status" value="1"/>
</dbReference>
<dbReference type="PANTHER" id="PTHR34039">
    <property type="entry name" value="UPF0102 PROTEIN YRAN"/>
    <property type="match status" value="1"/>
</dbReference>
<dbReference type="PANTHER" id="PTHR34039:SF1">
    <property type="entry name" value="UPF0102 PROTEIN YRAN"/>
    <property type="match status" value="1"/>
</dbReference>
<dbReference type="Pfam" id="PF02021">
    <property type="entry name" value="UPF0102"/>
    <property type="match status" value="1"/>
</dbReference>
<dbReference type="SUPFAM" id="SSF52980">
    <property type="entry name" value="Restriction endonuclease-like"/>
    <property type="match status" value="1"/>
</dbReference>
<proteinExistence type="inferred from homology"/>
<gene>
    <name type="ordered locus">Bcep18194_A3391</name>
</gene>
<comment type="similarity">
    <text evidence="1">Belongs to the UPF0102 family.</text>
</comment>
<comment type="sequence caution" evidence="3">
    <conflict type="erroneous initiation">
        <sequence resource="EMBL-CDS" id="ABB06993"/>
    </conflict>
</comment>
<protein>
    <recommendedName>
        <fullName evidence="1">UPF0102 protein Bcep18194_A3391</fullName>
    </recommendedName>
</protein>
<sequence>MCHAAPARPGDGRGLPRAGDNFSGAARSKPVGAAFEQRARQFLERRGLVFVAANVTMRGGELDLVMREPDGMLVFVEVRARRSARHGGAAASVGWRKRRRLVAAALQFWARHGAGAACRFDVVAFEAGQLAWLRDAFRADDA</sequence>